<organism>
    <name type="scientific">Methanocaldococcus jannaschii (strain ATCC 43067 / DSM 2661 / JAL-1 / JCM 10045 / NBRC 100440)</name>
    <name type="common">Methanococcus jannaschii</name>
    <dbReference type="NCBI Taxonomy" id="243232"/>
    <lineage>
        <taxon>Archaea</taxon>
        <taxon>Methanobacteriati</taxon>
        <taxon>Methanobacteriota</taxon>
        <taxon>Methanomada group</taxon>
        <taxon>Methanococci</taxon>
        <taxon>Methanococcales</taxon>
        <taxon>Methanocaldococcaceae</taxon>
        <taxon>Methanocaldococcus</taxon>
    </lineage>
</organism>
<dbReference type="EC" id="5.6.2.3" evidence="1"/>
<dbReference type="EC" id="5.6.2.4" evidence="1"/>
<dbReference type="EMBL" id="L77118">
    <property type="protein sequence ID" value="AAC37081.1"/>
    <property type="molecule type" value="Genomic_DNA"/>
</dbReference>
<dbReference type="PIR" id="H64510">
    <property type="entry name" value="H64510"/>
</dbReference>
<dbReference type="PaxDb" id="243232-MJ_ECL08"/>
<dbReference type="EnsemblBacteria" id="AAC37081">
    <property type="protein sequence ID" value="AAC37081"/>
    <property type="gene ID" value="MJ_ECL08"/>
</dbReference>
<dbReference type="KEGG" id="mja:MJ_ECL08"/>
<dbReference type="eggNOG" id="arCOG00280">
    <property type="taxonomic scope" value="Archaea"/>
</dbReference>
<dbReference type="HOGENOM" id="CLU_023842_2_0_2"/>
<dbReference type="InParanoid" id="Q60270"/>
<dbReference type="OrthoDB" id="107033at2157"/>
<dbReference type="PhylomeDB" id="Q60270"/>
<dbReference type="Proteomes" id="UP000000805">
    <property type="component" value="Plasmid pDSM2661_1"/>
</dbReference>
<dbReference type="GO" id="GO:0005524">
    <property type="term" value="F:ATP binding"/>
    <property type="evidence" value="ECO:0007669"/>
    <property type="project" value="UniProtKB-KW"/>
</dbReference>
<dbReference type="GO" id="GO:0016887">
    <property type="term" value="F:ATP hydrolysis activity"/>
    <property type="evidence" value="ECO:0007669"/>
    <property type="project" value="RHEA"/>
</dbReference>
<dbReference type="GO" id="GO:0004386">
    <property type="term" value="F:helicase activity"/>
    <property type="evidence" value="ECO:0007669"/>
    <property type="project" value="UniProtKB-KW"/>
</dbReference>
<dbReference type="Gene3D" id="3.40.50.300">
    <property type="entry name" value="P-loop containing nucleotide triphosphate hydrolases"/>
    <property type="match status" value="2"/>
</dbReference>
<dbReference type="InterPro" id="IPR008571">
    <property type="entry name" value="HerA-like"/>
</dbReference>
<dbReference type="InterPro" id="IPR018538">
    <property type="entry name" value="HerA_barrel_dom"/>
</dbReference>
<dbReference type="InterPro" id="IPR033186">
    <property type="entry name" value="HerA_C"/>
</dbReference>
<dbReference type="InterPro" id="IPR002789">
    <property type="entry name" value="HerA_central"/>
</dbReference>
<dbReference type="InterPro" id="IPR027417">
    <property type="entry name" value="P-loop_NTPase"/>
</dbReference>
<dbReference type="PANTHER" id="PTHR42957">
    <property type="entry name" value="HELICASE MJ1565-RELATED"/>
    <property type="match status" value="1"/>
</dbReference>
<dbReference type="PANTHER" id="PTHR42957:SF1">
    <property type="entry name" value="HELICASE MJ1565-RELATED"/>
    <property type="match status" value="1"/>
</dbReference>
<dbReference type="Pfam" id="PF01935">
    <property type="entry name" value="DUF87"/>
    <property type="match status" value="1"/>
</dbReference>
<dbReference type="Pfam" id="PF09378">
    <property type="entry name" value="HAS-barrel"/>
    <property type="match status" value="1"/>
</dbReference>
<dbReference type="Pfam" id="PF05872">
    <property type="entry name" value="HerA_C"/>
    <property type="match status" value="1"/>
</dbReference>
<dbReference type="SUPFAM" id="SSF52540">
    <property type="entry name" value="P-loop containing nucleoside triphosphate hydrolases"/>
    <property type="match status" value="1"/>
</dbReference>
<gene>
    <name evidence="4" type="ordered locus">MJECL08</name>
</gene>
<reference key="1">
    <citation type="journal article" date="1996" name="Science">
        <title>Complete genome sequence of the methanogenic archaeon, Methanococcus jannaschii.</title>
        <authorList>
            <person name="Bult C.J."/>
            <person name="White O."/>
            <person name="Olsen G.J."/>
            <person name="Zhou L."/>
            <person name="Fleischmann R.D."/>
            <person name="Sutton G.G."/>
            <person name="Blake J.A."/>
            <person name="FitzGerald L.M."/>
            <person name="Clayton R.A."/>
            <person name="Gocayne J.D."/>
            <person name="Kerlavage A.R."/>
            <person name="Dougherty B.A."/>
            <person name="Tomb J.-F."/>
            <person name="Adams M.D."/>
            <person name="Reich C.I."/>
            <person name="Overbeek R."/>
            <person name="Kirkness E.F."/>
            <person name="Weinstock K.G."/>
            <person name="Merrick J.M."/>
            <person name="Glodek A."/>
            <person name="Scott J.L."/>
            <person name="Geoghagen N.S.M."/>
            <person name="Weidman J.F."/>
            <person name="Fuhrmann J.L."/>
            <person name="Nguyen D."/>
            <person name="Utterback T.R."/>
            <person name="Kelley J.M."/>
            <person name="Peterson J.D."/>
            <person name="Sadow P.W."/>
            <person name="Hanna M.C."/>
            <person name="Cotton M.D."/>
            <person name="Roberts K.M."/>
            <person name="Hurst M.A."/>
            <person name="Kaine B.P."/>
            <person name="Borodovsky M."/>
            <person name="Klenk H.-P."/>
            <person name="Fraser C.M."/>
            <person name="Smith H.O."/>
            <person name="Woese C.R."/>
            <person name="Venter J.C."/>
        </authorList>
    </citation>
    <scope>NUCLEOTIDE SEQUENCE [LARGE SCALE GENOMIC DNA]</scope>
    <source>
        <strain>ATCC 43067 / DSM 2661 / JAL-1 / JCM 10045 / NBRC 100440</strain>
    </source>
</reference>
<keyword id="KW-0067">ATP-binding</keyword>
<keyword id="KW-0238">DNA-binding</keyword>
<keyword id="KW-0347">Helicase</keyword>
<keyword id="KW-0378">Hydrolase</keyword>
<keyword id="KW-0413">Isomerase</keyword>
<keyword id="KW-0547">Nucleotide-binding</keyword>
<keyword id="KW-0614">Plasmid</keyword>
<keyword id="KW-1185">Reference proteome</keyword>
<sequence>MMVINSVVVGTVVASKNVNEFEFVIENQVIDKIKKGEFVITKNTHGDYLLSKITKIVSVNALIGDKSEDASELAKIRGVIYSEEMLNNSSKFLASAKILGVINNESGSIESNVYPINVPQNVYLTKDDLLAKIFSNGSIEVGYLKVRSSTKVKLNAKELCSRHFAVLAMTGAGKSNTIAVLVQELFEKDKGKMNIVIVDPHGEYVKMRNTHILPAKLNPILVPEEHLAKLLGIGENSSVQKSFLVYAALTVKYECKENKKQISGLEYLKKIEEKLVECADKIANSEDKKRIYIEYYDGTRCRXKTVKKDDEMSINRVIEKLRWFINKNKNILGENEGMFDIKSDKINVLPLQKIEDEEAITIVGEFLKRVLKERIKSVHDEIVEIKALEKPTLVIIEEAHLFAAKNLKDRSGYWINRIAKEGRKFGVGLGLVSQRPKELNPTVLSQMNTKIILRIVEPTDQKYILESSENVGEDLLQDLPQLSTGEAIVVGSSLPLPALVKIKKYDGVLGGEDGLKNLKI</sequence>
<protein>
    <recommendedName>
        <fullName evidence="3">Probable helicase MJECL08</fullName>
        <ecNumber evidence="1">5.6.2.3</ecNumber>
        <ecNumber evidence="1">5.6.2.4</ecNumber>
    </recommendedName>
    <alternativeName>
        <fullName evidence="3">Probable bidirectional DNA 3'-5' and 5'-3' helicase MJECL08</fullName>
    </alternativeName>
</protein>
<evidence type="ECO:0000250" key="1">
    <source>
        <dbReference type="UniProtKB" id="F2Z5Z6"/>
    </source>
</evidence>
<evidence type="ECO:0000250" key="2">
    <source>
        <dbReference type="UniProtKB" id="Q97WG8"/>
    </source>
</evidence>
<evidence type="ECO:0000305" key="3"/>
<evidence type="ECO:0000312" key="4">
    <source>
        <dbReference type="EMBL" id="AAC37081.1"/>
    </source>
</evidence>
<name>Y3508_METJA</name>
<proteinExistence type="inferred from homology"/>
<geneLocation type="plasmid">
    <name>large ECE</name>
</geneLocation>
<comment type="function">
    <text evidence="1">A probably bidirectional DNA helicase.</text>
</comment>
<comment type="catalytic activity">
    <reaction evidence="1">
        <text>Couples ATP hydrolysis with the unwinding of duplex DNA at the replication fork by translocating in the 5'-3' direction. This creates two antiparallel DNA single strands (ssDNA). The leading ssDNA polymer is the template for DNA polymerase III holoenzyme which synthesizes a continuous strand.</text>
        <dbReference type="EC" id="5.6.2.3"/>
    </reaction>
</comment>
<comment type="catalytic activity">
    <reaction evidence="1">
        <text>ATP + H2O = ADP + phosphate + H(+)</text>
        <dbReference type="Rhea" id="RHEA:13065"/>
        <dbReference type="ChEBI" id="CHEBI:15377"/>
        <dbReference type="ChEBI" id="CHEBI:15378"/>
        <dbReference type="ChEBI" id="CHEBI:30616"/>
        <dbReference type="ChEBI" id="CHEBI:43474"/>
        <dbReference type="ChEBI" id="CHEBI:456216"/>
        <dbReference type="EC" id="5.6.2.3"/>
    </reaction>
</comment>
<comment type="catalytic activity">
    <reaction evidence="1">
        <text>Couples ATP hydrolysis with the unwinding of duplex DNA by translocating in the 3'-5' direction.</text>
        <dbReference type="EC" id="5.6.2.4"/>
    </reaction>
</comment>
<comment type="catalytic activity">
    <reaction evidence="1">
        <text>ATP + H2O = ADP + phosphate + H(+)</text>
        <dbReference type="Rhea" id="RHEA:13065"/>
        <dbReference type="ChEBI" id="CHEBI:15377"/>
        <dbReference type="ChEBI" id="CHEBI:15378"/>
        <dbReference type="ChEBI" id="CHEBI:30616"/>
        <dbReference type="ChEBI" id="CHEBI:43474"/>
        <dbReference type="ChEBI" id="CHEBI:456216"/>
        <dbReference type="EC" id="5.6.2.4"/>
    </reaction>
</comment>
<comment type="similarity">
    <text evidence="3">Belongs to the HerA family.</text>
</comment>
<accession>Q60270</accession>
<feature type="chain" id="PRO_0000107500" description="Probable helicase MJECL08">
    <location>
        <begin position="1"/>
        <end position="520"/>
    </location>
</feature>
<feature type="binding site" evidence="2">
    <location>
        <position position="162"/>
    </location>
    <ligand>
        <name>ATP</name>
        <dbReference type="ChEBI" id="CHEBI:30616"/>
    </ligand>
</feature>
<feature type="binding site" evidence="2">
    <location>
        <begin position="171"/>
        <end position="176"/>
    </location>
    <ligand>
        <name>ATP</name>
        <dbReference type="ChEBI" id="CHEBI:30616"/>
    </ligand>
</feature>
<feature type="binding site" evidence="2">
    <location>
        <begin position="501"/>
        <end position="502"/>
    </location>
    <ligand>
        <name>ATP</name>
        <dbReference type="ChEBI" id="CHEBI:30616"/>
    </ligand>
</feature>